<gene>
    <name evidence="1" type="primary">engB</name>
    <name type="ordered locus">BU432</name>
</gene>
<protein>
    <recommendedName>
        <fullName evidence="1">Probable GTP-binding protein EngB</fullName>
    </recommendedName>
</protein>
<dbReference type="EMBL" id="BA000003">
    <property type="protein sequence ID" value="BAB13130.1"/>
    <property type="molecule type" value="Genomic_DNA"/>
</dbReference>
<dbReference type="RefSeq" id="NP_240244.1">
    <property type="nucleotide sequence ID" value="NC_002528.1"/>
</dbReference>
<dbReference type="SMR" id="P57507"/>
<dbReference type="STRING" id="563178.BUAP5A_425"/>
<dbReference type="EnsemblBacteria" id="BAB13130">
    <property type="protein sequence ID" value="BAB13130"/>
    <property type="gene ID" value="BAB13130"/>
</dbReference>
<dbReference type="KEGG" id="buc:BU432"/>
<dbReference type="PATRIC" id="fig|107806.10.peg.441"/>
<dbReference type="eggNOG" id="COG0218">
    <property type="taxonomic scope" value="Bacteria"/>
</dbReference>
<dbReference type="HOGENOM" id="CLU_033732_1_0_6"/>
<dbReference type="Proteomes" id="UP000001806">
    <property type="component" value="Chromosome"/>
</dbReference>
<dbReference type="GO" id="GO:0005829">
    <property type="term" value="C:cytosol"/>
    <property type="evidence" value="ECO:0007669"/>
    <property type="project" value="TreeGrafter"/>
</dbReference>
<dbReference type="GO" id="GO:0005525">
    <property type="term" value="F:GTP binding"/>
    <property type="evidence" value="ECO:0007669"/>
    <property type="project" value="UniProtKB-UniRule"/>
</dbReference>
<dbReference type="GO" id="GO:0046872">
    <property type="term" value="F:metal ion binding"/>
    <property type="evidence" value="ECO:0007669"/>
    <property type="project" value="UniProtKB-KW"/>
</dbReference>
<dbReference type="GO" id="GO:0000917">
    <property type="term" value="P:division septum assembly"/>
    <property type="evidence" value="ECO:0007669"/>
    <property type="project" value="UniProtKB-KW"/>
</dbReference>
<dbReference type="CDD" id="cd01876">
    <property type="entry name" value="YihA_EngB"/>
    <property type="match status" value="1"/>
</dbReference>
<dbReference type="FunFam" id="3.40.50.300:FF:000098">
    <property type="entry name" value="Probable GTP-binding protein EngB"/>
    <property type="match status" value="1"/>
</dbReference>
<dbReference type="Gene3D" id="3.40.50.300">
    <property type="entry name" value="P-loop containing nucleotide triphosphate hydrolases"/>
    <property type="match status" value="1"/>
</dbReference>
<dbReference type="HAMAP" id="MF_00321">
    <property type="entry name" value="GTPase_EngB"/>
    <property type="match status" value="1"/>
</dbReference>
<dbReference type="InterPro" id="IPR030393">
    <property type="entry name" value="G_ENGB_dom"/>
</dbReference>
<dbReference type="InterPro" id="IPR006073">
    <property type="entry name" value="GTP-bd"/>
</dbReference>
<dbReference type="InterPro" id="IPR019987">
    <property type="entry name" value="GTP-bd_ribosome_bio_YsxC"/>
</dbReference>
<dbReference type="InterPro" id="IPR027417">
    <property type="entry name" value="P-loop_NTPase"/>
</dbReference>
<dbReference type="NCBIfam" id="TIGR03598">
    <property type="entry name" value="GTPase_YsxC"/>
    <property type="match status" value="1"/>
</dbReference>
<dbReference type="PANTHER" id="PTHR11649:SF13">
    <property type="entry name" value="ENGB-TYPE G DOMAIN-CONTAINING PROTEIN"/>
    <property type="match status" value="1"/>
</dbReference>
<dbReference type="PANTHER" id="PTHR11649">
    <property type="entry name" value="MSS1/TRME-RELATED GTP-BINDING PROTEIN"/>
    <property type="match status" value="1"/>
</dbReference>
<dbReference type="Pfam" id="PF01926">
    <property type="entry name" value="MMR_HSR1"/>
    <property type="match status" value="1"/>
</dbReference>
<dbReference type="SUPFAM" id="SSF52540">
    <property type="entry name" value="P-loop containing nucleoside triphosphate hydrolases"/>
    <property type="match status" value="1"/>
</dbReference>
<dbReference type="PROSITE" id="PS51706">
    <property type="entry name" value="G_ENGB"/>
    <property type="match status" value="1"/>
</dbReference>
<evidence type="ECO:0000255" key="1">
    <source>
        <dbReference type="HAMAP-Rule" id="MF_00321"/>
    </source>
</evidence>
<organism>
    <name type="scientific">Buchnera aphidicola subsp. Acyrthosiphon pisum (strain APS)</name>
    <name type="common">Acyrthosiphon pisum symbiotic bacterium</name>
    <dbReference type="NCBI Taxonomy" id="107806"/>
    <lineage>
        <taxon>Bacteria</taxon>
        <taxon>Pseudomonadati</taxon>
        <taxon>Pseudomonadota</taxon>
        <taxon>Gammaproteobacteria</taxon>
        <taxon>Enterobacterales</taxon>
        <taxon>Erwiniaceae</taxon>
        <taxon>Buchnera</taxon>
    </lineage>
</organism>
<sequence>MNSLDYNKTNFLKSYSKITDIDIQNGIEIAFIGYSNTGKSSAINALTNQKKLARFSKTPGRTQLINFFEVVSGFRIVDLPGYGYSQAPLLVRSKWQKKVYDYLEKREQIKLFVLLMDIRYPLKKLDQKIISIAVQKKISILVLLTKCDKIKINHQKNQADMVFKKLNVLLDSFEIILFSSYKKIGIEKLKLSLNSSYKKHFILNR</sequence>
<accession>P57507</accession>
<reference key="1">
    <citation type="journal article" date="2000" name="Nature">
        <title>Genome sequence of the endocellular bacterial symbiont of aphids Buchnera sp. APS.</title>
        <authorList>
            <person name="Shigenobu S."/>
            <person name="Watanabe H."/>
            <person name="Hattori M."/>
            <person name="Sakaki Y."/>
            <person name="Ishikawa H."/>
        </authorList>
    </citation>
    <scope>NUCLEOTIDE SEQUENCE [LARGE SCALE GENOMIC DNA]</scope>
    <source>
        <strain>APS</strain>
    </source>
</reference>
<proteinExistence type="inferred from homology"/>
<comment type="function">
    <text evidence="1">Necessary for normal cell division and for the maintenance of normal septation.</text>
</comment>
<comment type="cofactor">
    <cofactor evidence="1">
        <name>Mg(2+)</name>
        <dbReference type="ChEBI" id="CHEBI:18420"/>
    </cofactor>
</comment>
<comment type="similarity">
    <text evidence="1">Belongs to the TRAFAC class TrmE-Era-EngA-EngB-Septin-like GTPase superfamily. EngB GTPase family.</text>
</comment>
<keyword id="KW-0131">Cell cycle</keyword>
<keyword id="KW-0132">Cell division</keyword>
<keyword id="KW-0342">GTP-binding</keyword>
<keyword id="KW-0460">Magnesium</keyword>
<keyword id="KW-0479">Metal-binding</keyword>
<keyword id="KW-0547">Nucleotide-binding</keyword>
<keyword id="KW-1185">Reference proteome</keyword>
<keyword id="KW-0717">Septation</keyword>
<name>ENGB_BUCAI</name>
<feature type="chain" id="PRO_0000157739" description="Probable GTP-binding protein EngB">
    <location>
        <begin position="1"/>
        <end position="205"/>
    </location>
</feature>
<feature type="domain" description="EngB-type G" evidence="1">
    <location>
        <begin position="25"/>
        <end position="199"/>
    </location>
</feature>
<feature type="binding site" evidence="1">
    <location>
        <begin position="33"/>
        <end position="40"/>
    </location>
    <ligand>
        <name>GTP</name>
        <dbReference type="ChEBI" id="CHEBI:37565"/>
    </ligand>
</feature>
<feature type="binding site" evidence="1">
    <location>
        <position position="40"/>
    </location>
    <ligand>
        <name>Mg(2+)</name>
        <dbReference type="ChEBI" id="CHEBI:18420"/>
    </ligand>
</feature>
<feature type="binding site" evidence="1">
    <location>
        <begin position="60"/>
        <end position="64"/>
    </location>
    <ligand>
        <name>GTP</name>
        <dbReference type="ChEBI" id="CHEBI:37565"/>
    </ligand>
</feature>
<feature type="binding site" evidence="1">
    <location>
        <position position="62"/>
    </location>
    <ligand>
        <name>Mg(2+)</name>
        <dbReference type="ChEBI" id="CHEBI:18420"/>
    </ligand>
</feature>
<feature type="binding site" evidence="1">
    <location>
        <begin position="78"/>
        <end position="81"/>
    </location>
    <ligand>
        <name>GTP</name>
        <dbReference type="ChEBI" id="CHEBI:37565"/>
    </ligand>
</feature>
<feature type="binding site" evidence="1">
    <location>
        <begin position="145"/>
        <end position="148"/>
    </location>
    <ligand>
        <name>GTP</name>
        <dbReference type="ChEBI" id="CHEBI:37565"/>
    </ligand>
</feature>
<feature type="binding site" evidence="1">
    <location>
        <begin position="178"/>
        <end position="180"/>
    </location>
    <ligand>
        <name>GTP</name>
        <dbReference type="ChEBI" id="CHEBI:37565"/>
    </ligand>
</feature>